<evidence type="ECO:0000250" key="1">
    <source>
        <dbReference type="UniProtKB" id="Q6PAC3"/>
    </source>
</evidence>
<evidence type="ECO:0000250" key="2">
    <source>
        <dbReference type="UniProtKB" id="Q9NV06"/>
    </source>
</evidence>
<evidence type="ECO:0000256" key="3">
    <source>
        <dbReference type="SAM" id="MobiDB-lite"/>
    </source>
</evidence>
<evidence type="ECO:0000305" key="4"/>
<comment type="function">
    <text evidence="2">Part of the small subunit (SSU) processome, first precursor of the small eukaryotic ribosomal subunit. During the assembly of the SSU processome in the nucleolus, many ribosome biogenesis factors, an RNA chaperone and ribosomal proteins associate with the nascent pre-rRNA and work in concert to generate RNA folding, modifications, rearrangements and cleavage as well as targeted degradation of pre-ribosomal RNA by the RNA exosome.</text>
</comment>
<comment type="function">
    <text evidence="2">Substrate-recognition component of a DCX (DDB1-CUL4-X-box) E3 ubiquitin-protein ligase complex.</text>
</comment>
<comment type="pathway">
    <text>Protein modification; protein ubiquitination.</text>
</comment>
<comment type="subunit">
    <text evidence="2">Part of the small subunit (SSU) processome, composed of more than 70 proteins and the RNA chaperone small nucleolar RNA (snoRNA) U3. Component of the DCX(DCAF13) E3 ubiquitin ligase complex, at least composed of CUL4 (CUL4A or CUL4B), DDB1, DCAF13 and RBX1.</text>
</comment>
<comment type="subcellular location">
    <subcellularLocation>
        <location evidence="2">Nucleus</location>
        <location evidence="2">Nucleolus</location>
    </subcellularLocation>
    <text evidence="2">In the nucleolus, localizes predominantly in the granular component, but also detected in the fibrillar center and dense fibrillar component.</text>
</comment>
<comment type="similarity">
    <text evidence="4">Belongs to the WD repeat DCAF13/WDSOF1 family.</text>
</comment>
<name>DCA13_DANRE</name>
<proteinExistence type="evidence at transcript level"/>
<reference key="1">
    <citation type="submission" date="2003-01" db="EMBL/GenBank/DDBJ databases">
        <authorList>
            <consortium name="NIH - Zebrafish Gene Collection (ZGC) project"/>
        </authorList>
    </citation>
    <scope>NUCLEOTIDE SEQUENCE [LARGE SCALE MRNA]</scope>
    <source>
        <strain>AB</strain>
    </source>
</reference>
<sequence>MKVKVLCRNPDDYVRETTRDIQRVPRNYDPTLHPFEVPREYTRALNATKLERVFAKPFVASLDGHRDVISCITKHAKSLSTVISGACDGEVKVWNLPKRECTRTVQAHEGFVRGICSRFCGTSFFTVGDDKTIKQWNMEAPGYGVREEPINTILGKAVFTGIDHHQREGTFVTCGQTVDIWDEQRSSPVLSFSWGVDSFSSVRYNPVEPDLLASCASDRSIVLYDTRESAPLRKVIMQLRSNTLCWNPMEAYYFTCANEDYNLYTYDIRNLDVPVTVHMDHVSAVLDVDYSPTGREFVSASFDKTIRIFPKDKGHSREVYHTKRMQHVICVKWSADSKFIMSGSDEMNIRLWKANASEKLGVLSTREKTAANYNKKLIQKFQHHPQVRRIARHRHLPRDVLKQKRELKEMKEARRRKEQNVRKHSKPGSVPLLTEKEKHVVKVVE</sequence>
<dbReference type="EMBL" id="BC044155">
    <property type="protein sequence ID" value="AAH44155.1"/>
    <property type="molecule type" value="mRNA"/>
</dbReference>
<dbReference type="RefSeq" id="NP_956423.1">
    <property type="nucleotide sequence ID" value="NM_200129.1"/>
</dbReference>
<dbReference type="SMR" id="Q803X4"/>
<dbReference type="FunCoup" id="Q803X4">
    <property type="interactions" value="2395"/>
</dbReference>
<dbReference type="STRING" id="7955.ENSDARP00000028109"/>
<dbReference type="PaxDb" id="7955-ENSDARP00000028109"/>
<dbReference type="GeneID" id="393097"/>
<dbReference type="KEGG" id="dre:393097"/>
<dbReference type="AGR" id="ZFIN:ZDB-GENE-040426-703"/>
<dbReference type="CTD" id="25879"/>
<dbReference type="ZFIN" id="ZDB-GENE-040426-703">
    <property type="gene designation" value="dcaf13"/>
</dbReference>
<dbReference type="eggNOG" id="KOG0268">
    <property type="taxonomic scope" value="Eukaryota"/>
</dbReference>
<dbReference type="InParanoid" id="Q803X4"/>
<dbReference type="OrthoDB" id="10249065at2759"/>
<dbReference type="PhylomeDB" id="Q803X4"/>
<dbReference type="Reactome" id="R-DRE-8951664">
    <property type="pathway name" value="Neddylation"/>
</dbReference>
<dbReference type="UniPathway" id="UPA00143"/>
<dbReference type="PRO" id="PR:Q803X4"/>
<dbReference type="Proteomes" id="UP000000437">
    <property type="component" value="Chromosome 16"/>
</dbReference>
<dbReference type="GO" id="GO:0080008">
    <property type="term" value="C:Cul4-RING E3 ubiquitin ligase complex"/>
    <property type="evidence" value="ECO:0000250"/>
    <property type="project" value="UniProtKB"/>
</dbReference>
<dbReference type="GO" id="GO:0005730">
    <property type="term" value="C:nucleolus"/>
    <property type="evidence" value="ECO:0000250"/>
    <property type="project" value="UniProtKB"/>
</dbReference>
<dbReference type="GO" id="GO:0032040">
    <property type="term" value="C:small-subunit processome"/>
    <property type="evidence" value="ECO:0000318"/>
    <property type="project" value="GO_Central"/>
</dbReference>
<dbReference type="GO" id="GO:1990756">
    <property type="term" value="F:ubiquitin-like ligase-substrate adaptor activity"/>
    <property type="evidence" value="ECO:0000250"/>
    <property type="project" value="UniProtKB"/>
</dbReference>
<dbReference type="GO" id="GO:0000462">
    <property type="term" value="P:maturation of SSU-rRNA from tricistronic rRNA transcript (SSU-rRNA, 5.8S rRNA, LSU-rRNA)"/>
    <property type="evidence" value="ECO:0000318"/>
    <property type="project" value="GO_Central"/>
</dbReference>
<dbReference type="GO" id="GO:0001555">
    <property type="term" value="P:oocyte growth"/>
    <property type="evidence" value="ECO:0000250"/>
    <property type="project" value="UniProtKB"/>
</dbReference>
<dbReference type="GO" id="GO:0016567">
    <property type="term" value="P:protein ubiquitination"/>
    <property type="evidence" value="ECO:0007669"/>
    <property type="project" value="UniProtKB-UniPathway"/>
</dbReference>
<dbReference type="GO" id="GO:0006364">
    <property type="term" value="P:rRNA processing"/>
    <property type="evidence" value="ECO:0000250"/>
    <property type="project" value="UniProtKB"/>
</dbReference>
<dbReference type="CDD" id="cd00200">
    <property type="entry name" value="WD40"/>
    <property type="match status" value="1"/>
</dbReference>
<dbReference type="FunFam" id="2.130.10.10:FF:000132">
    <property type="entry name" value="DDB1- and CUL4-associated factor 13"/>
    <property type="match status" value="1"/>
</dbReference>
<dbReference type="FunFam" id="2.130.10.10:FF:000269">
    <property type="entry name" value="DDB1- and CUL4-associated factor 13"/>
    <property type="match status" value="1"/>
</dbReference>
<dbReference type="Gene3D" id="2.130.10.10">
    <property type="entry name" value="YVTN repeat-like/Quinoprotein amine dehydrogenase"/>
    <property type="match status" value="2"/>
</dbReference>
<dbReference type="InterPro" id="IPR007287">
    <property type="entry name" value="Sof1"/>
</dbReference>
<dbReference type="InterPro" id="IPR015943">
    <property type="entry name" value="WD40/YVTN_repeat-like_dom_sf"/>
</dbReference>
<dbReference type="InterPro" id="IPR019775">
    <property type="entry name" value="WD40_repeat_CS"/>
</dbReference>
<dbReference type="InterPro" id="IPR036322">
    <property type="entry name" value="WD40_repeat_dom_sf"/>
</dbReference>
<dbReference type="InterPro" id="IPR001680">
    <property type="entry name" value="WD40_rpt"/>
</dbReference>
<dbReference type="InterPro" id="IPR051733">
    <property type="entry name" value="WD_repeat_DCAF13/WDSOF1"/>
</dbReference>
<dbReference type="PANTHER" id="PTHR22851:SF0">
    <property type="entry name" value="DDB1- AND CUL4-ASSOCIATED FACTOR 13"/>
    <property type="match status" value="1"/>
</dbReference>
<dbReference type="PANTHER" id="PTHR22851">
    <property type="entry name" value="U3 SMALL NUCLEOLAR RNA U3 SNORNA ASSOCIATED PROTEIN"/>
    <property type="match status" value="1"/>
</dbReference>
<dbReference type="Pfam" id="PF04158">
    <property type="entry name" value="Sof1"/>
    <property type="match status" value="1"/>
</dbReference>
<dbReference type="Pfam" id="PF00400">
    <property type="entry name" value="WD40"/>
    <property type="match status" value="4"/>
</dbReference>
<dbReference type="SMART" id="SM00320">
    <property type="entry name" value="WD40"/>
    <property type="match status" value="6"/>
</dbReference>
<dbReference type="SUPFAM" id="SSF50978">
    <property type="entry name" value="WD40 repeat-like"/>
    <property type="match status" value="1"/>
</dbReference>
<dbReference type="PROSITE" id="PS00678">
    <property type="entry name" value="WD_REPEATS_1"/>
    <property type="match status" value="1"/>
</dbReference>
<dbReference type="PROSITE" id="PS50082">
    <property type="entry name" value="WD_REPEATS_2"/>
    <property type="match status" value="3"/>
</dbReference>
<dbReference type="PROSITE" id="PS50294">
    <property type="entry name" value="WD_REPEATS_REGION"/>
    <property type="match status" value="1"/>
</dbReference>
<feature type="chain" id="PRO_0000310432" description="DDB1- and CUL4-associated factor 13">
    <location>
        <begin position="1"/>
        <end position="445"/>
    </location>
</feature>
<feature type="repeat" description="WD 1">
    <location>
        <begin position="64"/>
        <end position="104"/>
    </location>
</feature>
<feature type="repeat" description="WD 2">
    <location>
        <begin position="107"/>
        <end position="146"/>
    </location>
</feature>
<feature type="repeat" description="WD 3">
    <location>
        <begin position="154"/>
        <end position="191"/>
    </location>
</feature>
<feature type="repeat" description="WD 4">
    <location>
        <begin position="194"/>
        <end position="234"/>
    </location>
</feature>
<feature type="repeat" description="WD 5">
    <location>
        <begin position="236"/>
        <end position="276"/>
    </location>
</feature>
<feature type="repeat" description="WD 6">
    <location>
        <begin position="280"/>
        <end position="319"/>
    </location>
</feature>
<feature type="repeat" description="WD 7">
    <location>
        <begin position="323"/>
        <end position="362"/>
    </location>
</feature>
<feature type="region of interest" description="Required for nucleolar location" evidence="1">
    <location>
        <begin position="353"/>
        <end position="441"/>
    </location>
</feature>
<feature type="region of interest" description="Disordered" evidence="3">
    <location>
        <begin position="411"/>
        <end position="434"/>
    </location>
</feature>
<feature type="compositionally biased region" description="Basic residues" evidence="3">
    <location>
        <begin position="413"/>
        <end position="426"/>
    </location>
</feature>
<protein>
    <recommendedName>
        <fullName>DDB1- and CUL4-associated factor 13</fullName>
    </recommendedName>
    <alternativeName>
        <fullName>WD repeat and SOF domain-containing protein 1</fullName>
    </alternativeName>
</protein>
<keyword id="KW-0539">Nucleus</keyword>
<keyword id="KW-1185">Reference proteome</keyword>
<keyword id="KW-0677">Repeat</keyword>
<keyword id="KW-0687">Ribonucleoprotein</keyword>
<keyword id="KW-0690">Ribosome biogenesis</keyword>
<keyword id="KW-0698">rRNA processing</keyword>
<keyword id="KW-0833">Ubl conjugation pathway</keyword>
<keyword id="KW-0853">WD repeat</keyword>
<accession>Q803X4</accession>
<organism>
    <name type="scientific">Danio rerio</name>
    <name type="common">Zebrafish</name>
    <name type="synonym">Brachydanio rerio</name>
    <dbReference type="NCBI Taxonomy" id="7955"/>
    <lineage>
        <taxon>Eukaryota</taxon>
        <taxon>Metazoa</taxon>
        <taxon>Chordata</taxon>
        <taxon>Craniata</taxon>
        <taxon>Vertebrata</taxon>
        <taxon>Euteleostomi</taxon>
        <taxon>Actinopterygii</taxon>
        <taxon>Neopterygii</taxon>
        <taxon>Teleostei</taxon>
        <taxon>Ostariophysi</taxon>
        <taxon>Cypriniformes</taxon>
        <taxon>Danionidae</taxon>
        <taxon>Danioninae</taxon>
        <taxon>Danio</taxon>
    </lineage>
</organism>
<gene>
    <name type="primary">dcaf13</name>
    <name type="synonym">wdsof1</name>
    <name type="ORF">zgc:55391</name>
</gene>